<evidence type="ECO:0000256" key="1">
    <source>
        <dbReference type="SAM" id="MobiDB-lite"/>
    </source>
</evidence>
<evidence type="ECO:0000305" key="2"/>
<dbReference type="EMBL" id="AL390059">
    <property type="status" value="NOT_ANNOTATED_CDS"/>
    <property type="molecule type" value="Genomic_DNA"/>
</dbReference>
<dbReference type="EMBL" id="AK126094">
    <property type="protein sequence ID" value="BAC86436.1"/>
    <property type="status" value="ALT_SEQ"/>
    <property type="molecule type" value="mRNA"/>
</dbReference>
<dbReference type="CCDS" id="CCDS47003.1"/>
<dbReference type="RefSeq" id="NP_001036155.1">
    <property type="nucleotide sequence ID" value="NM_001042690.2"/>
</dbReference>
<dbReference type="SMR" id="Q6ZTZ1"/>
<dbReference type="BioGRID" id="131343">
    <property type="interactions" value="1"/>
</dbReference>
<dbReference type="FunCoup" id="Q6ZTZ1">
    <property type="interactions" value="254"/>
</dbReference>
<dbReference type="STRING" id="9606.ENSP00000411584"/>
<dbReference type="GlyGen" id="Q6ZTZ1">
    <property type="glycosylation" value="1 site, 1 O-linked glycan (1 site)"/>
</dbReference>
<dbReference type="iPTMnet" id="Q6ZTZ1"/>
<dbReference type="PhosphoSitePlus" id="Q6ZTZ1"/>
<dbReference type="BioMuta" id="MSANTD1"/>
<dbReference type="DMDM" id="284018071"/>
<dbReference type="PaxDb" id="9606-ENSP00000411584"/>
<dbReference type="PeptideAtlas" id="Q6ZTZ1"/>
<dbReference type="ProteomicsDB" id="68302"/>
<dbReference type="Antibodypedia" id="57468">
    <property type="antibodies" value="46 antibodies from 9 providers"/>
</dbReference>
<dbReference type="DNASU" id="345222"/>
<dbReference type="Ensembl" id="ENST00000438480.7">
    <property type="protein sequence ID" value="ENSP00000411584.2"/>
    <property type="gene ID" value="ENSG00000188981.11"/>
</dbReference>
<dbReference type="GeneID" id="345222"/>
<dbReference type="KEGG" id="hsa:345222"/>
<dbReference type="MANE-Select" id="ENST00000438480.7">
    <property type="protein sequence ID" value="ENSP00000411584.2"/>
    <property type="RefSeq nucleotide sequence ID" value="NM_001042690.2"/>
    <property type="RefSeq protein sequence ID" value="NP_001036155.1"/>
</dbReference>
<dbReference type="UCSC" id="uc003ggs.4">
    <property type="organism name" value="human"/>
</dbReference>
<dbReference type="AGR" id="HGNC:33741"/>
<dbReference type="CTD" id="345222"/>
<dbReference type="DisGeNET" id="345222"/>
<dbReference type="GeneCards" id="MSANTD1"/>
<dbReference type="HGNC" id="HGNC:33741">
    <property type="gene designation" value="MSANTD1"/>
</dbReference>
<dbReference type="HPA" id="ENSG00000188981">
    <property type="expression patterns" value="Tissue enhanced (brain, testis)"/>
</dbReference>
<dbReference type="neXtProt" id="NX_Q6ZTZ1"/>
<dbReference type="OpenTargets" id="ENSG00000188981"/>
<dbReference type="PharmGKB" id="PA162379942"/>
<dbReference type="VEuPathDB" id="HostDB:ENSG00000188981"/>
<dbReference type="eggNOG" id="KOG4282">
    <property type="taxonomic scope" value="Eukaryota"/>
</dbReference>
<dbReference type="GeneTree" id="ENSGT00390000002245"/>
<dbReference type="InParanoid" id="Q6ZTZ1"/>
<dbReference type="OMA" id="FQFRRLK"/>
<dbReference type="OrthoDB" id="6081971at2759"/>
<dbReference type="PAN-GO" id="Q6ZTZ1">
    <property type="GO annotations" value="2 GO annotations based on evolutionary models"/>
</dbReference>
<dbReference type="PhylomeDB" id="Q6ZTZ1"/>
<dbReference type="TreeFam" id="TF331923"/>
<dbReference type="PathwayCommons" id="Q6ZTZ1"/>
<dbReference type="BioGRID-ORCS" id="345222">
    <property type="hits" value="11 hits in 1146 CRISPR screens"/>
</dbReference>
<dbReference type="GenomeRNAi" id="345222"/>
<dbReference type="Pharos" id="Q6ZTZ1">
    <property type="development level" value="Tdark"/>
</dbReference>
<dbReference type="PRO" id="PR:Q6ZTZ1"/>
<dbReference type="Proteomes" id="UP000005640">
    <property type="component" value="Chromosome 4"/>
</dbReference>
<dbReference type="RNAct" id="Q6ZTZ1">
    <property type="molecule type" value="protein"/>
</dbReference>
<dbReference type="Bgee" id="ENSG00000188981">
    <property type="expression patterns" value="Expressed in mucosa of stomach and 89 other cell types or tissues"/>
</dbReference>
<dbReference type="ExpressionAtlas" id="Q6ZTZ1">
    <property type="expression patterns" value="baseline and differential"/>
</dbReference>
<dbReference type="GO" id="GO:0016604">
    <property type="term" value="C:nuclear body"/>
    <property type="evidence" value="ECO:0000318"/>
    <property type="project" value="GO_Central"/>
</dbReference>
<dbReference type="GO" id="GO:0045893">
    <property type="term" value="P:positive regulation of DNA-templated transcription"/>
    <property type="evidence" value="ECO:0000318"/>
    <property type="project" value="GO_Central"/>
</dbReference>
<dbReference type="FunFam" id="1.10.10.60:FF:000135">
    <property type="entry name" value="Myb/SANT-like DNA-binding domain containing 1"/>
    <property type="match status" value="1"/>
</dbReference>
<dbReference type="Gene3D" id="1.10.10.60">
    <property type="entry name" value="Homeodomain-like"/>
    <property type="match status" value="1"/>
</dbReference>
<dbReference type="InterPro" id="IPR026095">
    <property type="entry name" value="Myb/SANT-like_DNA-bd_dom_prot"/>
</dbReference>
<dbReference type="InterPro" id="IPR044822">
    <property type="entry name" value="Myb_DNA-bind_4"/>
</dbReference>
<dbReference type="PANTHER" id="PTHR22666">
    <property type="entry name" value="MYB_SANT-LIKE DNA-BINDING DOMAIN-CONTAINING PROTEIN 1"/>
    <property type="match status" value="1"/>
</dbReference>
<dbReference type="PANTHER" id="PTHR22666:SF3">
    <property type="entry name" value="MYB_SANT-LIKE DNA-BINDING DOMAIN-CONTAINING PROTEIN 1"/>
    <property type="match status" value="1"/>
</dbReference>
<dbReference type="Pfam" id="PF13837">
    <property type="entry name" value="Myb_DNA-bind_4"/>
    <property type="match status" value="1"/>
</dbReference>
<proteinExistence type="evidence at transcript level"/>
<name>MSD1_HUMAN</name>
<keyword id="KW-1185">Reference proteome</keyword>
<comment type="sequence caution" evidence="2">
    <conflict type="miscellaneous discrepancy">
        <sequence resource="EMBL-CDS" id="BAC86436"/>
    </conflict>
    <text>Probable cloning artifact.</text>
</comment>
<organism>
    <name type="scientific">Homo sapiens</name>
    <name type="common">Human</name>
    <dbReference type="NCBI Taxonomy" id="9606"/>
    <lineage>
        <taxon>Eukaryota</taxon>
        <taxon>Metazoa</taxon>
        <taxon>Chordata</taxon>
        <taxon>Craniata</taxon>
        <taxon>Vertebrata</taxon>
        <taxon>Euteleostomi</taxon>
        <taxon>Mammalia</taxon>
        <taxon>Eutheria</taxon>
        <taxon>Euarchontoglires</taxon>
        <taxon>Primates</taxon>
        <taxon>Haplorrhini</taxon>
        <taxon>Catarrhini</taxon>
        <taxon>Hominidae</taxon>
        <taxon>Homo</taxon>
    </lineage>
</organism>
<reference key="1">
    <citation type="journal article" date="2005" name="Nature">
        <title>Generation and annotation of the DNA sequences of human chromosomes 2 and 4.</title>
        <authorList>
            <person name="Hillier L.W."/>
            <person name="Graves T.A."/>
            <person name="Fulton R.S."/>
            <person name="Fulton L.A."/>
            <person name="Pepin K.H."/>
            <person name="Minx P."/>
            <person name="Wagner-McPherson C."/>
            <person name="Layman D."/>
            <person name="Wylie K."/>
            <person name="Sekhon M."/>
            <person name="Becker M.C."/>
            <person name="Fewell G.A."/>
            <person name="Delehaunty K.D."/>
            <person name="Miner T.L."/>
            <person name="Nash W.E."/>
            <person name="Kremitzki C."/>
            <person name="Oddy L."/>
            <person name="Du H."/>
            <person name="Sun H."/>
            <person name="Bradshaw-Cordum H."/>
            <person name="Ali J."/>
            <person name="Carter J."/>
            <person name="Cordes M."/>
            <person name="Harris A."/>
            <person name="Isak A."/>
            <person name="van Brunt A."/>
            <person name="Nguyen C."/>
            <person name="Du F."/>
            <person name="Courtney L."/>
            <person name="Kalicki J."/>
            <person name="Ozersky P."/>
            <person name="Abbott S."/>
            <person name="Armstrong J."/>
            <person name="Belter E.A."/>
            <person name="Caruso L."/>
            <person name="Cedroni M."/>
            <person name="Cotton M."/>
            <person name="Davidson T."/>
            <person name="Desai A."/>
            <person name="Elliott G."/>
            <person name="Erb T."/>
            <person name="Fronick C."/>
            <person name="Gaige T."/>
            <person name="Haakenson W."/>
            <person name="Haglund K."/>
            <person name="Holmes A."/>
            <person name="Harkins R."/>
            <person name="Kim K."/>
            <person name="Kruchowski S.S."/>
            <person name="Strong C.M."/>
            <person name="Grewal N."/>
            <person name="Goyea E."/>
            <person name="Hou S."/>
            <person name="Levy A."/>
            <person name="Martinka S."/>
            <person name="Mead K."/>
            <person name="McLellan M.D."/>
            <person name="Meyer R."/>
            <person name="Randall-Maher J."/>
            <person name="Tomlinson C."/>
            <person name="Dauphin-Kohlberg S."/>
            <person name="Kozlowicz-Reilly A."/>
            <person name="Shah N."/>
            <person name="Swearengen-Shahid S."/>
            <person name="Snider J."/>
            <person name="Strong J.T."/>
            <person name="Thompson J."/>
            <person name="Yoakum M."/>
            <person name="Leonard S."/>
            <person name="Pearman C."/>
            <person name="Trani L."/>
            <person name="Radionenko M."/>
            <person name="Waligorski J.E."/>
            <person name="Wang C."/>
            <person name="Rock S.M."/>
            <person name="Tin-Wollam A.-M."/>
            <person name="Maupin R."/>
            <person name="Latreille P."/>
            <person name="Wendl M.C."/>
            <person name="Yang S.-P."/>
            <person name="Pohl C."/>
            <person name="Wallis J.W."/>
            <person name="Spieth J."/>
            <person name="Bieri T.A."/>
            <person name="Berkowicz N."/>
            <person name="Nelson J.O."/>
            <person name="Osborne J."/>
            <person name="Ding L."/>
            <person name="Meyer R."/>
            <person name="Sabo A."/>
            <person name="Shotland Y."/>
            <person name="Sinha P."/>
            <person name="Wohldmann P.E."/>
            <person name="Cook L.L."/>
            <person name="Hickenbotham M.T."/>
            <person name="Eldred J."/>
            <person name="Williams D."/>
            <person name="Jones T.A."/>
            <person name="She X."/>
            <person name="Ciccarelli F.D."/>
            <person name="Izaurralde E."/>
            <person name="Taylor J."/>
            <person name="Schmutz J."/>
            <person name="Myers R.M."/>
            <person name="Cox D.R."/>
            <person name="Huang X."/>
            <person name="McPherson J.D."/>
            <person name="Mardis E.R."/>
            <person name="Clifton S.W."/>
            <person name="Warren W.C."/>
            <person name="Chinwalla A.T."/>
            <person name="Eddy S.R."/>
            <person name="Marra M.A."/>
            <person name="Ovcharenko I."/>
            <person name="Furey T.S."/>
            <person name="Miller W."/>
            <person name="Eichler E.E."/>
            <person name="Bork P."/>
            <person name="Suyama M."/>
            <person name="Torrents D."/>
            <person name="Waterston R.H."/>
            <person name="Wilson R.K."/>
        </authorList>
    </citation>
    <scope>NUCLEOTIDE SEQUENCE [LARGE SCALE GENOMIC DNA]</scope>
</reference>
<reference key="2">
    <citation type="journal article" date="2004" name="Nat. Genet.">
        <title>Complete sequencing and characterization of 21,243 full-length human cDNAs.</title>
        <authorList>
            <person name="Ota T."/>
            <person name="Suzuki Y."/>
            <person name="Nishikawa T."/>
            <person name="Otsuki T."/>
            <person name="Sugiyama T."/>
            <person name="Irie R."/>
            <person name="Wakamatsu A."/>
            <person name="Hayashi K."/>
            <person name="Sato H."/>
            <person name="Nagai K."/>
            <person name="Kimura K."/>
            <person name="Makita H."/>
            <person name="Sekine M."/>
            <person name="Obayashi M."/>
            <person name="Nishi T."/>
            <person name="Shibahara T."/>
            <person name="Tanaka T."/>
            <person name="Ishii S."/>
            <person name="Yamamoto J."/>
            <person name="Saito K."/>
            <person name="Kawai Y."/>
            <person name="Isono Y."/>
            <person name="Nakamura Y."/>
            <person name="Nagahari K."/>
            <person name="Murakami K."/>
            <person name="Yasuda T."/>
            <person name="Iwayanagi T."/>
            <person name="Wagatsuma M."/>
            <person name="Shiratori A."/>
            <person name="Sudo H."/>
            <person name="Hosoiri T."/>
            <person name="Kaku Y."/>
            <person name="Kodaira H."/>
            <person name="Kondo H."/>
            <person name="Sugawara M."/>
            <person name="Takahashi M."/>
            <person name="Kanda K."/>
            <person name="Yokoi T."/>
            <person name="Furuya T."/>
            <person name="Kikkawa E."/>
            <person name="Omura Y."/>
            <person name="Abe K."/>
            <person name="Kamihara K."/>
            <person name="Katsuta N."/>
            <person name="Sato K."/>
            <person name="Tanikawa M."/>
            <person name="Yamazaki M."/>
            <person name="Ninomiya K."/>
            <person name="Ishibashi T."/>
            <person name="Yamashita H."/>
            <person name="Murakawa K."/>
            <person name="Fujimori K."/>
            <person name="Tanai H."/>
            <person name="Kimata M."/>
            <person name="Watanabe M."/>
            <person name="Hiraoka S."/>
            <person name="Chiba Y."/>
            <person name="Ishida S."/>
            <person name="Ono Y."/>
            <person name="Takiguchi S."/>
            <person name="Watanabe S."/>
            <person name="Yosida M."/>
            <person name="Hotuta T."/>
            <person name="Kusano J."/>
            <person name="Kanehori K."/>
            <person name="Takahashi-Fujii A."/>
            <person name="Hara H."/>
            <person name="Tanase T.-O."/>
            <person name="Nomura Y."/>
            <person name="Togiya S."/>
            <person name="Komai F."/>
            <person name="Hara R."/>
            <person name="Takeuchi K."/>
            <person name="Arita M."/>
            <person name="Imose N."/>
            <person name="Musashino K."/>
            <person name="Yuuki H."/>
            <person name="Oshima A."/>
            <person name="Sasaki N."/>
            <person name="Aotsuka S."/>
            <person name="Yoshikawa Y."/>
            <person name="Matsunawa H."/>
            <person name="Ichihara T."/>
            <person name="Shiohata N."/>
            <person name="Sano S."/>
            <person name="Moriya S."/>
            <person name="Momiyama H."/>
            <person name="Satoh N."/>
            <person name="Takami S."/>
            <person name="Terashima Y."/>
            <person name="Suzuki O."/>
            <person name="Nakagawa S."/>
            <person name="Senoh A."/>
            <person name="Mizoguchi H."/>
            <person name="Goto Y."/>
            <person name="Shimizu F."/>
            <person name="Wakebe H."/>
            <person name="Hishigaki H."/>
            <person name="Watanabe T."/>
            <person name="Sugiyama A."/>
            <person name="Takemoto M."/>
            <person name="Kawakami B."/>
            <person name="Yamazaki M."/>
            <person name="Watanabe K."/>
            <person name="Kumagai A."/>
            <person name="Itakura S."/>
            <person name="Fukuzumi Y."/>
            <person name="Fujimori Y."/>
            <person name="Komiyama M."/>
            <person name="Tashiro H."/>
            <person name="Tanigami A."/>
            <person name="Fujiwara T."/>
            <person name="Ono T."/>
            <person name="Yamada K."/>
            <person name="Fujii Y."/>
            <person name="Ozaki K."/>
            <person name="Hirao M."/>
            <person name="Ohmori Y."/>
            <person name="Kawabata A."/>
            <person name="Hikiji T."/>
            <person name="Kobatake N."/>
            <person name="Inagaki H."/>
            <person name="Ikema Y."/>
            <person name="Okamoto S."/>
            <person name="Okitani R."/>
            <person name="Kawakami T."/>
            <person name="Noguchi S."/>
            <person name="Itoh T."/>
            <person name="Shigeta K."/>
            <person name="Senba T."/>
            <person name="Matsumura K."/>
            <person name="Nakajima Y."/>
            <person name="Mizuno T."/>
            <person name="Morinaga M."/>
            <person name="Sasaki M."/>
            <person name="Togashi T."/>
            <person name="Oyama M."/>
            <person name="Hata H."/>
            <person name="Watanabe M."/>
            <person name="Komatsu T."/>
            <person name="Mizushima-Sugano J."/>
            <person name="Satoh T."/>
            <person name="Shirai Y."/>
            <person name="Takahashi Y."/>
            <person name="Nakagawa K."/>
            <person name="Okumura K."/>
            <person name="Nagase T."/>
            <person name="Nomura N."/>
            <person name="Kikuchi H."/>
            <person name="Masuho Y."/>
            <person name="Yamashita R."/>
            <person name="Nakai K."/>
            <person name="Yada T."/>
            <person name="Nakamura Y."/>
            <person name="Ohara O."/>
            <person name="Isogai T."/>
            <person name="Sugano S."/>
        </authorList>
    </citation>
    <scope>NUCLEOTIDE SEQUENCE [LARGE SCALE MRNA] OF 1-243</scope>
    <source>
        <tissue>Testis</tissue>
    </source>
</reference>
<protein>
    <recommendedName>
        <fullName>Myb/SANT-like DNA-binding domain-containing protein 1</fullName>
    </recommendedName>
</protein>
<sequence length="278" mass="31632">MVRGAGPGPSLSALSHPTGASGMAAAEGPGYLVSPQAEKHRRARNWTDAEMRGLMLVWEEFFDELKQTKRNAKVYEKMASKLFEMTGERRLGEEIKIKITNMTFQYRKLKCMTDSESAPPDWPYYLAIDGILAKVPESCDGKLPDSQPPGPSTSQTEASLSPPAKSTPLYFPYNQCSYEGRFEDDRSDSSSSLLSLKFRSEERPVKKRKVQSCHLQKKQLRLLEAMVEEQRRLSRAVEETCREVRRVLDQQHILQVQSLQLQERMMSLLERIITKSSV</sequence>
<accession>Q6ZTZ1</accession>
<accession>C9J6V0</accession>
<gene>
    <name type="primary">MSANTD1</name>
    <name type="synonym">C4orf44</name>
</gene>
<feature type="chain" id="PRO_0000321819" description="Myb/SANT-like DNA-binding domain-containing protein 1">
    <location>
        <begin position="1"/>
        <end position="278"/>
    </location>
</feature>
<feature type="domain" description="Myb-like">
    <location>
        <begin position="44"/>
        <end position="129"/>
    </location>
</feature>
<feature type="region of interest" description="Disordered" evidence="1">
    <location>
        <begin position="1"/>
        <end position="27"/>
    </location>
</feature>
<feature type="region of interest" description="Disordered" evidence="1">
    <location>
        <begin position="138"/>
        <end position="168"/>
    </location>
</feature>
<feature type="sequence conflict" description="In Ref. 2; BAC86436." evidence="2" ref="2">
    <original>E</original>
    <variation>G</variation>
    <location>
        <position position="64"/>
    </location>
</feature>